<feature type="chain" id="PRO_0000144704" description="SPI-1 type 3 secretion system ATPase">
    <location>
        <begin position="1"/>
        <end position="431"/>
    </location>
</feature>
<feature type="binding site" evidence="2">
    <location>
        <begin position="162"/>
        <end position="167"/>
    </location>
    <ligand>
        <name>ATP</name>
        <dbReference type="ChEBI" id="CHEBI:30616"/>
    </ligand>
</feature>
<accession>P0A1C0</accession>
<accession>P39444</accession>
<comment type="function">
    <text evidence="1">ATPase component of the type III secretion system (T3SS), also called injectisome, which is used to inject bacterial effector proteins into eukaryotic host cells (By similarity). Acts as a molecular motor to provide the energy that is required for the export of proteins (By similarity). Required for type III secretion apparatus (T3SA) formation, proper protein secretion, host cell invasion and virulence (By similarity). May play a critical role in T3SS substrate recognition, disassembly of the effector/chaperone complex and unfolding of the effector in an ATP-dependent manner prior to secretion (By similarity).</text>
</comment>
<comment type="catalytic activity">
    <reaction evidence="1">
        <text>ATP + H2O + cellular proteinSide 1 = ADP + phosphate + cellular proteinSide 2.</text>
        <dbReference type="EC" id="7.4.2.8"/>
    </reaction>
</comment>
<comment type="subunit">
    <text evidence="1">The core secretion machinery of the T3SS is composed of approximately 20 different proteins, including cytoplasmic components, a base, an export apparatus and a needle (By similarity). This subunit is part of the cytosolic complex (By similarity). Forms homohexamers (By similarity).</text>
</comment>
<comment type="subcellular location">
    <subcellularLocation>
        <location evidence="1">Cytoplasm</location>
    </subcellularLocation>
</comment>
<comment type="similarity">
    <text evidence="3">Belongs to the ATPase alpha/beta chains family. T3SS ATPase subfamily.</text>
</comment>
<reference key="1">
    <citation type="journal article" date="2001" name="Nature">
        <title>Complete genome sequence of a multiple drug resistant Salmonella enterica serovar Typhi CT18.</title>
        <authorList>
            <person name="Parkhill J."/>
            <person name="Dougan G."/>
            <person name="James K.D."/>
            <person name="Thomson N.R."/>
            <person name="Pickard D."/>
            <person name="Wain J."/>
            <person name="Churcher C.M."/>
            <person name="Mungall K.L."/>
            <person name="Bentley S.D."/>
            <person name="Holden M.T.G."/>
            <person name="Sebaihia M."/>
            <person name="Baker S."/>
            <person name="Basham D."/>
            <person name="Brooks K."/>
            <person name="Chillingworth T."/>
            <person name="Connerton P."/>
            <person name="Cronin A."/>
            <person name="Davis P."/>
            <person name="Davies R.M."/>
            <person name="Dowd L."/>
            <person name="White N."/>
            <person name="Farrar J."/>
            <person name="Feltwell T."/>
            <person name="Hamlin N."/>
            <person name="Haque A."/>
            <person name="Hien T.T."/>
            <person name="Holroyd S."/>
            <person name="Jagels K."/>
            <person name="Krogh A."/>
            <person name="Larsen T.S."/>
            <person name="Leather S."/>
            <person name="Moule S."/>
            <person name="O'Gaora P."/>
            <person name="Parry C."/>
            <person name="Quail M.A."/>
            <person name="Rutherford K.M."/>
            <person name="Simmonds M."/>
            <person name="Skelton J."/>
            <person name="Stevens K."/>
            <person name="Whitehead S."/>
            <person name="Barrell B.G."/>
        </authorList>
    </citation>
    <scope>NUCLEOTIDE SEQUENCE [LARGE SCALE GENOMIC DNA]</scope>
    <source>
        <strain>CT18</strain>
    </source>
</reference>
<reference key="2">
    <citation type="journal article" date="2003" name="J. Bacteriol.">
        <title>Comparative genomics of Salmonella enterica serovar Typhi strains Ty2 and CT18.</title>
        <authorList>
            <person name="Deng W."/>
            <person name="Liou S.-R."/>
            <person name="Plunkett G. III"/>
            <person name="Mayhew G.F."/>
            <person name="Rose D.J."/>
            <person name="Burland V."/>
            <person name="Kodoyianni V."/>
            <person name="Schwartz D.C."/>
            <person name="Blattner F.R."/>
        </authorList>
    </citation>
    <scope>NUCLEOTIDE SEQUENCE [LARGE SCALE GENOMIC DNA]</scope>
    <source>
        <strain>ATCC 700931 / Ty2</strain>
    </source>
</reference>
<name>SCTN1_SALTI</name>
<sequence length="431" mass="47611">MKTPRLLQYLAYPQKITGPIIEAELRDVAIGELCEIRRGWHQKQVVARAQVVGLQRERTVLSLIGNAQGLSRDVVLYPTGRALSAWVGYSVLGAVLDPTGKIVERFTPEVAPISEERVIDVAPPSYASRVGVREPLITGVRAIDGLLTCGVGQRMGIFASAGCGKTMLMHMLIEQTEADVFVIGLIGERGREVTEFVDMLRASHKKEKCVLVFATSDFPSVDRCNAAQLATTVAEYFRDQGKRVVLFIDSMTRYARALRDVALASGERPARRGYPASVFDNLPRLLERPGATSEGSITAFYTVLLESEEEADPMADEIRSILDGHLYLSRKLAGQGHYPAIDVLKSVSRVFGQVTTPTHAEQASAVRKLMTRLEELQLFIDLGEYRPGENIDNDRAMQMRDSLKAWLCQPVAQYSSFDDTLSGMNAFADQN</sequence>
<evidence type="ECO:0000250" key="1">
    <source>
        <dbReference type="UniProtKB" id="P0A1B9"/>
    </source>
</evidence>
<evidence type="ECO:0000250" key="2">
    <source>
        <dbReference type="UniProtKB" id="P0A1C1"/>
    </source>
</evidence>
<evidence type="ECO:0000305" key="3"/>
<protein>
    <recommendedName>
        <fullName evidence="1">SPI-1 type 3 secretion system ATPase</fullName>
        <shortName evidence="1">T3SS-1 ATPase</shortName>
        <ecNumber evidence="1">7.4.2.8</ecNumber>
    </recommendedName>
    <alternativeName>
        <fullName>Invasion protein InvC</fullName>
    </alternativeName>
</protein>
<dbReference type="EC" id="7.4.2.8" evidence="1"/>
<dbReference type="EMBL" id="AL513382">
    <property type="protein sequence ID" value="CAD06001.1"/>
    <property type="molecule type" value="Genomic_DNA"/>
</dbReference>
<dbReference type="EMBL" id="AE014613">
    <property type="protein sequence ID" value="AAO70357.1"/>
    <property type="molecule type" value="Genomic_DNA"/>
</dbReference>
<dbReference type="RefSeq" id="NP_457288.1">
    <property type="nucleotide sequence ID" value="NC_003198.1"/>
</dbReference>
<dbReference type="RefSeq" id="WP_000856766.1">
    <property type="nucleotide sequence ID" value="NZ_WSUR01000005.1"/>
</dbReference>
<dbReference type="SMR" id="P0A1C0"/>
<dbReference type="STRING" id="220341.gene:17586911"/>
<dbReference type="KEGG" id="stt:t2796"/>
<dbReference type="KEGG" id="sty:STY3017"/>
<dbReference type="PATRIC" id="fig|220341.7.peg.3071"/>
<dbReference type="eggNOG" id="COG1157">
    <property type="taxonomic scope" value="Bacteria"/>
</dbReference>
<dbReference type="HOGENOM" id="CLU_022398_5_1_6"/>
<dbReference type="OMA" id="YPRNYIR"/>
<dbReference type="OrthoDB" id="9148544at2"/>
<dbReference type="Proteomes" id="UP000000541">
    <property type="component" value="Chromosome"/>
</dbReference>
<dbReference type="Proteomes" id="UP000002670">
    <property type="component" value="Chromosome"/>
</dbReference>
<dbReference type="GO" id="GO:0005737">
    <property type="term" value="C:cytoplasm"/>
    <property type="evidence" value="ECO:0007669"/>
    <property type="project" value="UniProtKB-SubCell"/>
</dbReference>
<dbReference type="GO" id="GO:0030257">
    <property type="term" value="C:type III protein secretion system complex"/>
    <property type="evidence" value="ECO:0007669"/>
    <property type="project" value="InterPro"/>
</dbReference>
<dbReference type="GO" id="GO:0005524">
    <property type="term" value="F:ATP binding"/>
    <property type="evidence" value="ECO:0007669"/>
    <property type="project" value="UniProtKB-KW"/>
</dbReference>
<dbReference type="GO" id="GO:0016887">
    <property type="term" value="F:ATP hydrolysis activity"/>
    <property type="evidence" value="ECO:0007669"/>
    <property type="project" value="InterPro"/>
</dbReference>
<dbReference type="GO" id="GO:0008564">
    <property type="term" value="F:protein-exporting ATPase activity"/>
    <property type="evidence" value="ECO:0007669"/>
    <property type="project" value="UniProtKB-EC"/>
</dbReference>
<dbReference type="GO" id="GO:0046933">
    <property type="term" value="F:proton-transporting ATP synthase activity, rotational mechanism"/>
    <property type="evidence" value="ECO:0007669"/>
    <property type="project" value="TreeGrafter"/>
</dbReference>
<dbReference type="GO" id="GO:0030254">
    <property type="term" value="P:protein secretion by the type III secretion system"/>
    <property type="evidence" value="ECO:0007669"/>
    <property type="project" value="InterPro"/>
</dbReference>
<dbReference type="CDD" id="cd01426">
    <property type="entry name" value="ATP-synt_F1_V1_A1_AB_FliI_N"/>
    <property type="match status" value="1"/>
</dbReference>
<dbReference type="CDD" id="cd01136">
    <property type="entry name" value="ATPase_flagellum-secretory_path_III"/>
    <property type="match status" value="1"/>
</dbReference>
<dbReference type="FunFam" id="3.40.50.12240:FF:000002">
    <property type="entry name" value="Flagellum-specific ATP synthase FliI"/>
    <property type="match status" value="1"/>
</dbReference>
<dbReference type="Gene3D" id="3.40.50.12240">
    <property type="match status" value="1"/>
</dbReference>
<dbReference type="InterPro" id="IPR003593">
    <property type="entry name" value="AAA+_ATPase"/>
</dbReference>
<dbReference type="InterPro" id="IPR020003">
    <property type="entry name" value="ATPase_a/bsu_AS"/>
</dbReference>
<dbReference type="InterPro" id="IPR050053">
    <property type="entry name" value="ATPase_alpha/beta_chains"/>
</dbReference>
<dbReference type="InterPro" id="IPR004100">
    <property type="entry name" value="ATPase_F1/V1/A1_a/bsu_N"/>
</dbReference>
<dbReference type="InterPro" id="IPR000194">
    <property type="entry name" value="ATPase_F1/V1/A1_a/bsu_nucl-bd"/>
</dbReference>
<dbReference type="InterPro" id="IPR005714">
    <property type="entry name" value="ATPase_T3SS_FliI/YscN"/>
</dbReference>
<dbReference type="InterPro" id="IPR027417">
    <property type="entry name" value="P-loop_NTPase"/>
</dbReference>
<dbReference type="InterPro" id="IPR040627">
    <property type="entry name" value="T3SS_ATPase_C"/>
</dbReference>
<dbReference type="NCBIfam" id="TIGR01026">
    <property type="entry name" value="fliI_yscN"/>
    <property type="match status" value="1"/>
</dbReference>
<dbReference type="NCBIfam" id="NF006012">
    <property type="entry name" value="PRK08149.1"/>
    <property type="match status" value="1"/>
</dbReference>
<dbReference type="PANTHER" id="PTHR15184">
    <property type="entry name" value="ATP SYNTHASE"/>
    <property type="match status" value="1"/>
</dbReference>
<dbReference type="PANTHER" id="PTHR15184:SF9">
    <property type="entry name" value="SPI-1 TYPE 3 SECRETION SYSTEM ATPASE"/>
    <property type="match status" value="1"/>
</dbReference>
<dbReference type="Pfam" id="PF00006">
    <property type="entry name" value="ATP-synt_ab"/>
    <property type="match status" value="1"/>
</dbReference>
<dbReference type="Pfam" id="PF02874">
    <property type="entry name" value="ATP-synt_ab_N"/>
    <property type="match status" value="1"/>
</dbReference>
<dbReference type="Pfam" id="PF18269">
    <property type="entry name" value="T3SS_ATPase_C"/>
    <property type="match status" value="1"/>
</dbReference>
<dbReference type="SMART" id="SM00382">
    <property type="entry name" value="AAA"/>
    <property type="match status" value="1"/>
</dbReference>
<dbReference type="SUPFAM" id="SSF52540">
    <property type="entry name" value="P-loop containing nucleoside triphosphate hydrolases"/>
    <property type="match status" value="1"/>
</dbReference>
<dbReference type="PROSITE" id="PS00152">
    <property type="entry name" value="ATPASE_ALPHA_BETA"/>
    <property type="match status" value="1"/>
</dbReference>
<keyword id="KW-0067">ATP-binding</keyword>
<keyword id="KW-0963">Cytoplasm</keyword>
<keyword id="KW-0547">Nucleotide-binding</keyword>
<keyword id="KW-0653">Protein transport</keyword>
<keyword id="KW-1278">Translocase</keyword>
<keyword id="KW-0813">Transport</keyword>
<keyword id="KW-0843">Virulence</keyword>
<organism>
    <name type="scientific">Salmonella typhi</name>
    <dbReference type="NCBI Taxonomy" id="90370"/>
    <lineage>
        <taxon>Bacteria</taxon>
        <taxon>Pseudomonadati</taxon>
        <taxon>Pseudomonadota</taxon>
        <taxon>Gammaproteobacteria</taxon>
        <taxon>Enterobacterales</taxon>
        <taxon>Enterobacteriaceae</taxon>
        <taxon>Salmonella</taxon>
    </lineage>
</organism>
<gene>
    <name evidence="1" type="primary">sctN1</name>
    <name type="synonym">invC</name>
    <name type="synonym">spaI</name>
    <name type="synonym">spaL</name>
    <name type="ordered locus">STY3017</name>
    <name type="ordered locus">t2796</name>
</gene>
<proteinExistence type="inferred from homology"/>